<proteinExistence type="inferred from homology"/>
<accession>A0LK20</accession>
<keyword id="KW-0175">Coiled coil</keyword>
<keyword id="KW-0238">DNA-binding</keyword>
<keyword id="KW-1185">Reference proteome</keyword>
<keyword id="KW-0804">Transcription</keyword>
<keyword id="KW-0805">Transcription regulation</keyword>
<name>GREA_SYNFM</name>
<organism>
    <name type="scientific">Syntrophobacter fumaroxidans (strain DSM 10017 / MPOB)</name>
    <dbReference type="NCBI Taxonomy" id="335543"/>
    <lineage>
        <taxon>Bacteria</taxon>
        <taxon>Pseudomonadati</taxon>
        <taxon>Thermodesulfobacteriota</taxon>
        <taxon>Syntrophobacteria</taxon>
        <taxon>Syntrophobacterales</taxon>
        <taxon>Syntrophobacteraceae</taxon>
        <taxon>Syntrophobacter</taxon>
    </lineage>
</organism>
<feature type="chain" id="PRO_1000094201" description="Transcription elongation factor GreA">
    <location>
        <begin position="1"/>
        <end position="156"/>
    </location>
</feature>
<feature type="coiled-coil region" evidence="1">
    <location>
        <begin position="44"/>
        <end position="67"/>
    </location>
</feature>
<protein>
    <recommendedName>
        <fullName evidence="1">Transcription elongation factor GreA</fullName>
    </recommendedName>
    <alternativeName>
        <fullName evidence="1">Transcript cleavage factor GreA</fullName>
    </alternativeName>
</protein>
<sequence>MPRVPITKEGFERLKIELQRLQRDERPMVIRAIEEARSHGDISENAEYEAAKEKQAMIEGRIQDLCQKMGECEIVEPSDNDNGRAIFGSTVVVEDTETGEVTSYRLVGPYEADVQSGTISVVSPLGKALIGKEEGEEIRVQTPKGVRNIEVLEIRN</sequence>
<reference key="1">
    <citation type="submission" date="2006-10" db="EMBL/GenBank/DDBJ databases">
        <title>Complete sequence of Syntrophobacter fumaroxidans MPOB.</title>
        <authorList>
            <consortium name="US DOE Joint Genome Institute"/>
            <person name="Copeland A."/>
            <person name="Lucas S."/>
            <person name="Lapidus A."/>
            <person name="Barry K."/>
            <person name="Detter J.C."/>
            <person name="Glavina del Rio T."/>
            <person name="Hammon N."/>
            <person name="Israni S."/>
            <person name="Pitluck S."/>
            <person name="Goltsman E.G."/>
            <person name="Martinez M."/>
            <person name="Schmutz J."/>
            <person name="Larimer F."/>
            <person name="Land M."/>
            <person name="Hauser L."/>
            <person name="Kyrpides N."/>
            <person name="Kim E."/>
            <person name="Boone D.R."/>
            <person name="Brockman F."/>
            <person name="Culley D."/>
            <person name="Ferry J."/>
            <person name="Gunsalus R."/>
            <person name="McInerney M.J."/>
            <person name="Morrison M."/>
            <person name="Plugge C."/>
            <person name="Rohlin L."/>
            <person name="Scholten J."/>
            <person name="Sieber J."/>
            <person name="Stams A.J.M."/>
            <person name="Worm P."/>
            <person name="Henstra A.M."/>
            <person name="Richardson P."/>
        </authorList>
    </citation>
    <scope>NUCLEOTIDE SEQUENCE [LARGE SCALE GENOMIC DNA]</scope>
    <source>
        <strain>DSM 10017 / MPOB</strain>
    </source>
</reference>
<evidence type="ECO:0000255" key="1">
    <source>
        <dbReference type="HAMAP-Rule" id="MF_00105"/>
    </source>
</evidence>
<dbReference type="EMBL" id="CP000478">
    <property type="protein sequence ID" value="ABK17772.1"/>
    <property type="molecule type" value="Genomic_DNA"/>
</dbReference>
<dbReference type="RefSeq" id="WP_011698941.1">
    <property type="nucleotide sequence ID" value="NC_008554.1"/>
</dbReference>
<dbReference type="SMR" id="A0LK20"/>
<dbReference type="FunCoup" id="A0LK20">
    <property type="interactions" value="489"/>
</dbReference>
<dbReference type="STRING" id="335543.Sfum_2089"/>
<dbReference type="KEGG" id="sfu:Sfum_2089"/>
<dbReference type="eggNOG" id="COG0782">
    <property type="taxonomic scope" value="Bacteria"/>
</dbReference>
<dbReference type="HOGENOM" id="CLU_101379_2_0_7"/>
<dbReference type="InParanoid" id="A0LK20"/>
<dbReference type="OrthoDB" id="9808774at2"/>
<dbReference type="Proteomes" id="UP000001784">
    <property type="component" value="Chromosome"/>
</dbReference>
<dbReference type="GO" id="GO:0003677">
    <property type="term" value="F:DNA binding"/>
    <property type="evidence" value="ECO:0007669"/>
    <property type="project" value="UniProtKB-UniRule"/>
</dbReference>
<dbReference type="GO" id="GO:0070063">
    <property type="term" value="F:RNA polymerase binding"/>
    <property type="evidence" value="ECO:0007669"/>
    <property type="project" value="InterPro"/>
</dbReference>
<dbReference type="GO" id="GO:0006354">
    <property type="term" value="P:DNA-templated transcription elongation"/>
    <property type="evidence" value="ECO:0007669"/>
    <property type="project" value="TreeGrafter"/>
</dbReference>
<dbReference type="GO" id="GO:0032784">
    <property type="term" value="P:regulation of DNA-templated transcription elongation"/>
    <property type="evidence" value="ECO:0007669"/>
    <property type="project" value="UniProtKB-UniRule"/>
</dbReference>
<dbReference type="FunFam" id="1.10.287.180:FF:000001">
    <property type="entry name" value="Transcription elongation factor GreA"/>
    <property type="match status" value="1"/>
</dbReference>
<dbReference type="FunFam" id="3.10.50.30:FF:000001">
    <property type="entry name" value="Transcription elongation factor GreA"/>
    <property type="match status" value="1"/>
</dbReference>
<dbReference type="Gene3D" id="3.10.50.30">
    <property type="entry name" value="Transcription elongation factor, GreA/GreB, C-terminal domain"/>
    <property type="match status" value="1"/>
</dbReference>
<dbReference type="Gene3D" id="1.10.287.180">
    <property type="entry name" value="Transcription elongation factor, GreA/GreB, N-terminal domain"/>
    <property type="match status" value="1"/>
</dbReference>
<dbReference type="HAMAP" id="MF_00105">
    <property type="entry name" value="GreA_GreB"/>
    <property type="match status" value="1"/>
</dbReference>
<dbReference type="InterPro" id="IPR036953">
    <property type="entry name" value="GreA/GreB_C_sf"/>
</dbReference>
<dbReference type="InterPro" id="IPR018151">
    <property type="entry name" value="TF_GreA/GreB_CS"/>
</dbReference>
<dbReference type="InterPro" id="IPR006359">
    <property type="entry name" value="Tscrpt_elong_fac_GreA"/>
</dbReference>
<dbReference type="InterPro" id="IPR028624">
    <property type="entry name" value="Tscrpt_elong_fac_GreA/B"/>
</dbReference>
<dbReference type="InterPro" id="IPR001437">
    <property type="entry name" value="Tscrpt_elong_fac_GreA/B_C"/>
</dbReference>
<dbReference type="InterPro" id="IPR023459">
    <property type="entry name" value="Tscrpt_elong_fac_GreA/B_fam"/>
</dbReference>
<dbReference type="InterPro" id="IPR022691">
    <property type="entry name" value="Tscrpt_elong_fac_GreA/B_N"/>
</dbReference>
<dbReference type="InterPro" id="IPR036805">
    <property type="entry name" value="Tscrpt_elong_fac_GreA/B_N_sf"/>
</dbReference>
<dbReference type="NCBIfam" id="TIGR01462">
    <property type="entry name" value="greA"/>
    <property type="match status" value="1"/>
</dbReference>
<dbReference type="NCBIfam" id="NF001261">
    <property type="entry name" value="PRK00226.1-2"/>
    <property type="match status" value="1"/>
</dbReference>
<dbReference type="NCBIfam" id="NF001263">
    <property type="entry name" value="PRK00226.1-4"/>
    <property type="match status" value="1"/>
</dbReference>
<dbReference type="NCBIfam" id="NF001264">
    <property type="entry name" value="PRK00226.1-5"/>
    <property type="match status" value="1"/>
</dbReference>
<dbReference type="PANTHER" id="PTHR30437">
    <property type="entry name" value="TRANSCRIPTION ELONGATION FACTOR GREA"/>
    <property type="match status" value="1"/>
</dbReference>
<dbReference type="PANTHER" id="PTHR30437:SF4">
    <property type="entry name" value="TRANSCRIPTION ELONGATION FACTOR GREA"/>
    <property type="match status" value="1"/>
</dbReference>
<dbReference type="Pfam" id="PF01272">
    <property type="entry name" value="GreA_GreB"/>
    <property type="match status" value="1"/>
</dbReference>
<dbReference type="Pfam" id="PF03449">
    <property type="entry name" value="GreA_GreB_N"/>
    <property type="match status" value="1"/>
</dbReference>
<dbReference type="PIRSF" id="PIRSF006092">
    <property type="entry name" value="GreA_GreB"/>
    <property type="match status" value="1"/>
</dbReference>
<dbReference type="SUPFAM" id="SSF54534">
    <property type="entry name" value="FKBP-like"/>
    <property type="match status" value="1"/>
</dbReference>
<dbReference type="SUPFAM" id="SSF46557">
    <property type="entry name" value="GreA transcript cleavage protein, N-terminal domain"/>
    <property type="match status" value="1"/>
</dbReference>
<dbReference type="PROSITE" id="PS00829">
    <property type="entry name" value="GREAB_1"/>
    <property type="match status" value="1"/>
</dbReference>
<dbReference type="PROSITE" id="PS00830">
    <property type="entry name" value="GREAB_2"/>
    <property type="match status" value="1"/>
</dbReference>
<gene>
    <name evidence="1" type="primary">greA</name>
    <name type="ordered locus">Sfum_2089</name>
</gene>
<comment type="function">
    <text evidence="1">Necessary for efficient RNA polymerase transcription elongation past template-encoded arresting sites. The arresting sites in DNA have the property of trapping a certain fraction of elongating RNA polymerases that pass through, resulting in locked ternary complexes. Cleavage of the nascent transcript by cleavage factors such as GreA or GreB allows the resumption of elongation from the new 3'terminus. GreA releases sequences of 2 to 3 nucleotides.</text>
</comment>
<comment type="similarity">
    <text evidence="1">Belongs to the GreA/GreB family.</text>
</comment>